<comment type="similarity">
    <text evidence="2">Belongs to the site-specific recombinase resolvase family.</text>
</comment>
<organism>
    <name type="scientific">Sinorhizobium fredii (strain NBRC 101917 / NGR234)</name>
    <dbReference type="NCBI Taxonomy" id="394"/>
    <lineage>
        <taxon>Bacteria</taxon>
        <taxon>Pseudomonadati</taxon>
        <taxon>Pseudomonadota</taxon>
        <taxon>Alphaproteobacteria</taxon>
        <taxon>Hyphomicrobiales</taxon>
        <taxon>Rhizobiaceae</taxon>
        <taxon>Sinorhizobium/Ensifer group</taxon>
        <taxon>Sinorhizobium</taxon>
    </lineage>
</organism>
<dbReference type="EMBL" id="U00090">
    <property type="protein sequence ID" value="AAB92422.1"/>
    <property type="molecule type" value="Genomic_DNA"/>
</dbReference>
<dbReference type="RefSeq" id="NP_443799.1">
    <property type="nucleotide sequence ID" value="NC_000914.2"/>
</dbReference>
<dbReference type="RefSeq" id="WP_010875050.1">
    <property type="nucleotide sequence ID" value="NC_000914.2"/>
</dbReference>
<dbReference type="KEGG" id="rhi:NGR_a00070"/>
<dbReference type="PATRIC" id="fig|394.7.peg.5"/>
<dbReference type="eggNOG" id="COG1961">
    <property type="taxonomic scope" value="Bacteria"/>
</dbReference>
<dbReference type="HOGENOM" id="CLU_063615_0_0_5"/>
<dbReference type="OrthoDB" id="9800103at2"/>
<dbReference type="Proteomes" id="UP000001054">
    <property type="component" value="Plasmid pNGR234a"/>
</dbReference>
<dbReference type="GO" id="GO:0003677">
    <property type="term" value="F:DNA binding"/>
    <property type="evidence" value="ECO:0007669"/>
    <property type="project" value="UniProtKB-KW"/>
</dbReference>
<dbReference type="GO" id="GO:0000150">
    <property type="term" value="F:DNA strand exchange activity"/>
    <property type="evidence" value="ECO:0007669"/>
    <property type="project" value="UniProtKB-KW"/>
</dbReference>
<dbReference type="GO" id="GO:0015074">
    <property type="term" value="P:DNA integration"/>
    <property type="evidence" value="ECO:0007669"/>
    <property type="project" value="UniProtKB-KW"/>
</dbReference>
<dbReference type="CDD" id="cd03768">
    <property type="entry name" value="SR_ResInv"/>
    <property type="match status" value="1"/>
</dbReference>
<dbReference type="FunFam" id="3.40.50.1390:FF:000001">
    <property type="entry name" value="DNA recombinase"/>
    <property type="match status" value="1"/>
</dbReference>
<dbReference type="Gene3D" id="3.40.50.1390">
    <property type="entry name" value="Resolvase, N-terminal catalytic domain"/>
    <property type="match status" value="1"/>
</dbReference>
<dbReference type="InterPro" id="IPR006118">
    <property type="entry name" value="Recombinase_CS"/>
</dbReference>
<dbReference type="InterPro" id="IPR006119">
    <property type="entry name" value="Resolv_N"/>
</dbReference>
<dbReference type="InterPro" id="IPR036162">
    <property type="entry name" value="Resolvase-like_N_sf"/>
</dbReference>
<dbReference type="InterPro" id="IPR050639">
    <property type="entry name" value="SSR_resolvase"/>
</dbReference>
<dbReference type="PANTHER" id="PTHR30461">
    <property type="entry name" value="DNA-INVERTASE FROM LAMBDOID PROPHAGE"/>
    <property type="match status" value="1"/>
</dbReference>
<dbReference type="PANTHER" id="PTHR30461:SF2">
    <property type="entry name" value="SERINE RECOMBINASE PINE-RELATED"/>
    <property type="match status" value="1"/>
</dbReference>
<dbReference type="Pfam" id="PF00239">
    <property type="entry name" value="Resolvase"/>
    <property type="match status" value="1"/>
</dbReference>
<dbReference type="SMART" id="SM00857">
    <property type="entry name" value="Resolvase"/>
    <property type="match status" value="1"/>
</dbReference>
<dbReference type="SUPFAM" id="SSF53041">
    <property type="entry name" value="Resolvase-like"/>
    <property type="match status" value="1"/>
</dbReference>
<dbReference type="PROSITE" id="PS00397">
    <property type="entry name" value="RECOMBINASES_1"/>
    <property type="match status" value="1"/>
</dbReference>
<dbReference type="PROSITE" id="PS00398">
    <property type="entry name" value="RECOMBINASES_2"/>
    <property type="match status" value="1"/>
</dbReference>
<dbReference type="PROSITE" id="PS51736">
    <property type="entry name" value="RECOMBINASES_3"/>
    <property type="match status" value="1"/>
</dbReference>
<keyword id="KW-0229">DNA integration</keyword>
<keyword id="KW-0230">DNA invertase</keyword>
<keyword id="KW-0233">DNA recombination</keyword>
<keyword id="KW-0238">DNA-binding</keyword>
<keyword id="KW-0614">Plasmid</keyword>
<keyword id="KW-1185">Reference proteome</keyword>
<gene>
    <name type="ordered locus">NGR_a00070</name>
    <name type="ORF">y4cG</name>
</gene>
<proteinExistence type="inferred from homology"/>
<geneLocation type="plasmid">
    <name>sym pNGR234a</name>
</geneLocation>
<evidence type="ECO:0000255" key="1">
    <source>
        <dbReference type="PROSITE-ProRule" id="PRU01072"/>
    </source>
</evidence>
<evidence type="ECO:0000305" key="2"/>
<sequence length="305" mass="34277">MATAAYLNSPSLQQRLIGYARVSTEDQLNDAQVDELRAAGCHRIHQEHGSGASRARPVLAKLLKDLAMGDVLVVVRLDRLARSVSHLLDVIEDLEKRGVHFRSLRDPIDTSTPHGMFSLQVLGAVAQLERALIAERTKSGMQAAKARGRLAGNPGLRERRPEAIRAVSAARERAYLDELIVSAQTWLPTVRRLRPRHSWDNVVRILNRRGHDWTVERLRRAVHRLVREKLAEPELLARSLRRPPEDHLMRLVAGIAIADPNLSLRDIAAQLDQMQERPPRGGRKWQPSSVRALLDEASRIGLVRA</sequence>
<name>Y4CG_SINFN</name>
<feature type="chain" id="PRO_0000196386" description="Probable DNA-invertase y4cG">
    <location>
        <begin position="1"/>
        <end position="305"/>
    </location>
</feature>
<feature type="domain" description="Resolvase/invertase-type recombinase catalytic" evidence="1">
    <location>
        <begin position="15"/>
        <end position="148"/>
    </location>
</feature>
<feature type="active site" description="O-(5'-phospho-DNA)-serine intermediate" evidence="1">
    <location>
        <position position="23"/>
    </location>
</feature>
<accession>P55389</accession>
<protein>
    <recommendedName>
        <fullName>Probable DNA-invertase y4cG</fullName>
    </recommendedName>
</protein>
<reference key="1">
    <citation type="journal article" date="1997" name="Nature">
        <title>Molecular basis of symbiosis between Rhizobium and legumes.</title>
        <authorList>
            <person name="Freiberg C.A."/>
            <person name="Fellay R."/>
            <person name="Bairoch A."/>
            <person name="Broughton W.J."/>
            <person name="Rosenthal A."/>
            <person name="Perret X."/>
        </authorList>
    </citation>
    <scope>NUCLEOTIDE SEQUENCE [LARGE SCALE GENOMIC DNA]</scope>
    <source>
        <strain>NBRC 101917 / NGR234</strain>
    </source>
</reference>
<reference key="2">
    <citation type="journal article" date="2009" name="Appl. Environ. Microbiol.">
        <title>Rhizobium sp. strain NGR234 possesses a remarkable number of secretion systems.</title>
        <authorList>
            <person name="Schmeisser C."/>
            <person name="Liesegang H."/>
            <person name="Krysciak D."/>
            <person name="Bakkou N."/>
            <person name="Le Quere A."/>
            <person name="Wollherr A."/>
            <person name="Heinemeyer I."/>
            <person name="Morgenstern B."/>
            <person name="Pommerening-Roeser A."/>
            <person name="Flores M."/>
            <person name="Palacios R."/>
            <person name="Brenner S."/>
            <person name="Gottschalk G."/>
            <person name="Schmitz R.A."/>
            <person name="Broughton W.J."/>
            <person name="Perret X."/>
            <person name="Strittmatter A.W."/>
            <person name="Streit W.R."/>
        </authorList>
    </citation>
    <scope>NUCLEOTIDE SEQUENCE [LARGE SCALE GENOMIC DNA]</scope>
    <source>
        <strain>NBRC 101917 / NGR234</strain>
    </source>
</reference>